<accession>P41171</accession>
<dbReference type="EMBL" id="M81087">
    <property type="protein sequence ID" value="AAA53128.1"/>
    <property type="molecule type" value="Genomic_DNA"/>
</dbReference>
<dbReference type="SMR" id="P41171"/>
<dbReference type="GO" id="GO:0005886">
    <property type="term" value="C:plasma membrane"/>
    <property type="evidence" value="ECO:0007669"/>
    <property type="project" value="UniProtKB-SubCell"/>
</dbReference>
<dbReference type="GO" id="GO:0045259">
    <property type="term" value="C:proton-transporting ATP synthase complex"/>
    <property type="evidence" value="ECO:0007669"/>
    <property type="project" value="UniProtKB-KW"/>
</dbReference>
<dbReference type="GO" id="GO:0005524">
    <property type="term" value="F:ATP binding"/>
    <property type="evidence" value="ECO:0007669"/>
    <property type="project" value="UniProtKB-UniRule"/>
</dbReference>
<dbReference type="GO" id="GO:0046933">
    <property type="term" value="F:proton-transporting ATP synthase activity, rotational mechanism"/>
    <property type="evidence" value="ECO:0007669"/>
    <property type="project" value="UniProtKB-UniRule"/>
</dbReference>
<dbReference type="CDD" id="cd12152">
    <property type="entry name" value="F1-ATPase_delta"/>
    <property type="match status" value="1"/>
</dbReference>
<dbReference type="FunFam" id="2.60.15.10:FF:000001">
    <property type="entry name" value="ATP synthase epsilon chain"/>
    <property type="match status" value="1"/>
</dbReference>
<dbReference type="Gene3D" id="1.20.5.440">
    <property type="entry name" value="ATP synthase delta/epsilon subunit, C-terminal domain"/>
    <property type="match status" value="1"/>
</dbReference>
<dbReference type="Gene3D" id="2.60.15.10">
    <property type="entry name" value="F0F1 ATP synthase delta/epsilon subunit, N-terminal"/>
    <property type="match status" value="1"/>
</dbReference>
<dbReference type="HAMAP" id="MF_00530">
    <property type="entry name" value="ATP_synth_epsil_bac"/>
    <property type="match status" value="1"/>
</dbReference>
<dbReference type="InterPro" id="IPR036794">
    <property type="entry name" value="ATP_F1_dsu/esu_C_sf"/>
</dbReference>
<dbReference type="InterPro" id="IPR001469">
    <property type="entry name" value="ATP_synth_F1_dsu/esu"/>
</dbReference>
<dbReference type="InterPro" id="IPR020546">
    <property type="entry name" value="ATP_synth_F1_dsu/esu_N"/>
</dbReference>
<dbReference type="InterPro" id="IPR020547">
    <property type="entry name" value="ATP_synth_F1_esu_C"/>
</dbReference>
<dbReference type="InterPro" id="IPR036771">
    <property type="entry name" value="ATPsynth_dsu/esu_N"/>
</dbReference>
<dbReference type="NCBIfam" id="TIGR01216">
    <property type="entry name" value="ATP_synt_epsi"/>
    <property type="match status" value="1"/>
</dbReference>
<dbReference type="NCBIfam" id="NF001847">
    <property type="entry name" value="PRK00571.1-4"/>
    <property type="match status" value="1"/>
</dbReference>
<dbReference type="PANTHER" id="PTHR13822">
    <property type="entry name" value="ATP SYNTHASE DELTA/EPSILON CHAIN"/>
    <property type="match status" value="1"/>
</dbReference>
<dbReference type="PANTHER" id="PTHR13822:SF10">
    <property type="entry name" value="ATP SYNTHASE EPSILON CHAIN, CHLOROPLASTIC"/>
    <property type="match status" value="1"/>
</dbReference>
<dbReference type="Pfam" id="PF00401">
    <property type="entry name" value="ATP-synt_DE"/>
    <property type="match status" value="1"/>
</dbReference>
<dbReference type="Pfam" id="PF02823">
    <property type="entry name" value="ATP-synt_DE_N"/>
    <property type="match status" value="1"/>
</dbReference>
<dbReference type="SUPFAM" id="SSF46604">
    <property type="entry name" value="Epsilon subunit of F1F0-ATP synthase C-terminal domain"/>
    <property type="match status" value="1"/>
</dbReference>
<dbReference type="SUPFAM" id="SSF51344">
    <property type="entry name" value="Epsilon subunit of F1F0-ATP synthase N-terminal domain"/>
    <property type="match status" value="1"/>
</dbReference>
<sequence length="141" mass="15169">MAMTIDVRVVSAEGSIYAGVADMVVAPGEMGELGILPRHAPLLTGLRPGELRIIHGAETEYLFVNGGILEIQPDMVTVLADSAERATDIDEAKALAAKQAAEARMAGHTDQMEYAAAQAELLEQIARLKTVQRLREQGFVR</sequence>
<feature type="chain" id="PRO_0000188233" description="ATP synthase epsilon chain">
    <location>
        <begin position="1"/>
        <end position="141"/>
    </location>
</feature>
<gene>
    <name type="primary">atpC</name>
</gene>
<organism>
    <name type="scientific">Acidithiobacillus ferridurans</name>
    <dbReference type="NCBI Taxonomy" id="1232575"/>
    <lineage>
        <taxon>Bacteria</taxon>
        <taxon>Pseudomonadati</taxon>
        <taxon>Pseudomonadota</taxon>
        <taxon>Acidithiobacillia</taxon>
        <taxon>Acidithiobacillales</taxon>
        <taxon>Acidithiobacillaceae</taxon>
        <taxon>Acidithiobacillus</taxon>
    </lineage>
</organism>
<reference key="1">
    <citation type="journal article" date="1994" name="FEMS Microbiol. Lett.">
        <title>The F1 genes of the F1F0 ATP synthase from the acidophilic bacterium Thiobacillus ferrooxidans complement Escherichia coli F1 unc mutants.</title>
        <authorList>
            <person name="Brown L.D."/>
            <person name="Dennehy M.E."/>
            <person name="Rawlings D.E."/>
        </authorList>
    </citation>
    <scope>NUCLEOTIDE SEQUENCE [GENOMIC DNA]</scope>
    <source>
        <strain>ATCC 33020 / DSM 29468 / JCM 18981 / 11Fe</strain>
    </source>
</reference>
<proteinExistence type="inferred from homology"/>
<evidence type="ECO:0000250" key="1"/>
<evidence type="ECO:0000305" key="2"/>
<comment type="function">
    <text>Produces ATP from ADP in the presence of a proton gradient across the membrane.</text>
</comment>
<comment type="subunit">
    <text>F-type ATPases have 2 components, CF(1) - the catalytic core - and CF(0) - the membrane proton channel. CF(1) has five subunits: alpha(3), beta(3), gamma(1), delta(1), epsilon(1). CF(0) has three main subunits: a, b and c.</text>
</comment>
<comment type="subcellular location">
    <subcellularLocation>
        <location evidence="1">Cell inner membrane</location>
        <topology evidence="1">Peripheral membrane protein</topology>
    </subcellularLocation>
</comment>
<comment type="similarity">
    <text evidence="2">Belongs to the ATPase epsilon chain family.</text>
</comment>
<keyword id="KW-0066">ATP synthesis</keyword>
<keyword id="KW-0997">Cell inner membrane</keyword>
<keyword id="KW-1003">Cell membrane</keyword>
<keyword id="KW-0139">CF(1)</keyword>
<keyword id="KW-0375">Hydrogen ion transport</keyword>
<keyword id="KW-0406">Ion transport</keyword>
<keyword id="KW-0472">Membrane</keyword>
<keyword id="KW-0813">Transport</keyword>
<name>ATPE_ACIFI</name>
<protein>
    <recommendedName>
        <fullName>ATP synthase epsilon chain</fullName>
    </recommendedName>
    <alternativeName>
        <fullName>ATP synthase F1 sector epsilon subunit</fullName>
    </alternativeName>
    <alternativeName>
        <fullName>F-ATPase epsilon subunit</fullName>
    </alternativeName>
</protein>